<proteinExistence type="inferred from homology"/>
<name>NUSB_CAMLR</name>
<comment type="function">
    <text evidence="1">Involved in transcription antitermination. Required for transcription of ribosomal RNA (rRNA) genes. Binds specifically to the boxA antiterminator sequence of the ribosomal RNA (rrn) operons.</text>
</comment>
<comment type="similarity">
    <text evidence="1">Belongs to the NusB family.</text>
</comment>
<dbReference type="EMBL" id="CP000932">
    <property type="protein sequence ID" value="ACM63875.1"/>
    <property type="molecule type" value="Genomic_DNA"/>
</dbReference>
<dbReference type="RefSeq" id="WP_012661258.1">
    <property type="nucleotide sequence ID" value="NC_012039.1"/>
</dbReference>
<dbReference type="SMR" id="B9KFP0"/>
<dbReference type="STRING" id="306263.Cla_0541"/>
<dbReference type="KEGG" id="cla:CLA_0541"/>
<dbReference type="PATRIC" id="fig|306263.5.peg.524"/>
<dbReference type="eggNOG" id="COG0781">
    <property type="taxonomic scope" value="Bacteria"/>
</dbReference>
<dbReference type="HOGENOM" id="CLU_087843_3_3_7"/>
<dbReference type="Proteomes" id="UP000007727">
    <property type="component" value="Chromosome"/>
</dbReference>
<dbReference type="GO" id="GO:0005829">
    <property type="term" value="C:cytosol"/>
    <property type="evidence" value="ECO:0007669"/>
    <property type="project" value="TreeGrafter"/>
</dbReference>
<dbReference type="GO" id="GO:0003723">
    <property type="term" value="F:RNA binding"/>
    <property type="evidence" value="ECO:0007669"/>
    <property type="project" value="UniProtKB-UniRule"/>
</dbReference>
<dbReference type="GO" id="GO:0006353">
    <property type="term" value="P:DNA-templated transcription termination"/>
    <property type="evidence" value="ECO:0007669"/>
    <property type="project" value="UniProtKB-UniRule"/>
</dbReference>
<dbReference type="GO" id="GO:0031564">
    <property type="term" value="P:transcription antitermination"/>
    <property type="evidence" value="ECO:0007669"/>
    <property type="project" value="UniProtKB-KW"/>
</dbReference>
<dbReference type="Gene3D" id="1.10.940.10">
    <property type="entry name" value="NusB-like"/>
    <property type="match status" value="1"/>
</dbReference>
<dbReference type="HAMAP" id="MF_00073">
    <property type="entry name" value="NusB"/>
    <property type="match status" value="1"/>
</dbReference>
<dbReference type="InterPro" id="IPR035926">
    <property type="entry name" value="NusB-like_sf"/>
</dbReference>
<dbReference type="InterPro" id="IPR011605">
    <property type="entry name" value="NusB_fam"/>
</dbReference>
<dbReference type="InterPro" id="IPR006027">
    <property type="entry name" value="NusB_RsmB_TIM44"/>
</dbReference>
<dbReference type="NCBIfam" id="TIGR01951">
    <property type="entry name" value="nusB"/>
    <property type="match status" value="1"/>
</dbReference>
<dbReference type="PANTHER" id="PTHR11078:SF3">
    <property type="entry name" value="ANTITERMINATION NUSB DOMAIN-CONTAINING PROTEIN"/>
    <property type="match status" value="1"/>
</dbReference>
<dbReference type="PANTHER" id="PTHR11078">
    <property type="entry name" value="N UTILIZATION SUBSTANCE PROTEIN B-RELATED"/>
    <property type="match status" value="1"/>
</dbReference>
<dbReference type="Pfam" id="PF01029">
    <property type="entry name" value="NusB"/>
    <property type="match status" value="1"/>
</dbReference>
<dbReference type="SUPFAM" id="SSF48013">
    <property type="entry name" value="NusB-like"/>
    <property type="match status" value="1"/>
</dbReference>
<protein>
    <recommendedName>
        <fullName evidence="1">Transcription antitermination protein NusB</fullName>
    </recommendedName>
    <alternativeName>
        <fullName evidence="1">Antitermination factor NusB</fullName>
    </alternativeName>
</protein>
<organism>
    <name type="scientific">Campylobacter lari (strain RM2100 / D67 / ATCC BAA-1060)</name>
    <dbReference type="NCBI Taxonomy" id="306263"/>
    <lineage>
        <taxon>Bacteria</taxon>
        <taxon>Pseudomonadati</taxon>
        <taxon>Campylobacterota</taxon>
        <taxon>Epsilonproteobacteria</taxon>
        <taxon>Campylobacterales</taxon>
        <taxon>Campylobacteraceae</taxon>
        <taxon>Campylobacter</taxon>
    </lineage>
</organism>
<accession>B9KFP0</accession>
<feature type="chain" id="PRO_1000192422" description="Transcription antitermination protein NusB">
    <location>
        <begin position="1"/>
        <end position="132"/>
    </location>
</feature>
<gene>
    <name evidence="1" type="primary">nusB</name>
    <name type="ordered locus">Cla_0541</name>
</gene>
<sequence>MATRHQVRQSIVSLLYAAQLNQENKDFINEFLDEKKIRNDQRKFTLDLYNGINEQLALLDEKINECLKEHKLDGVASIEKAILRLGAYEILFTSTQKAIIINEAIELAKEMAGDNAPKFINGVLDKINKEVQ</sequence>
<keyword id="KW-1185">Reference proteome</keyword>
<keyword id="KW-0694">RNA-binding</keyword>
<keyword id="KW-0804">Transcription</keyword>
<keyword id="KW-0889">Transcription antitermination</keyword>
<keyword id="KW-0805">Transcription regulation</keyword>
<evidence type="ECO:0000255" key="1">
    <source>
        <dbReference type="HAMAP-Rule" id="MF_00073"/>
    </source>
</evidence>
<reference key="1">
    <citation type="journal article" date="2008" name="Foodborne Pathog. Dis.">
        <title>The complete genome sequence and analysis of the human pathogen Campylobacter lari.</title>
        <authorList>
            <person name="Miller W.G."/>
            <person name="Wang G."/>
            <person name="Binnewies T.T."/>
            <person name="Parker C.T."/>
        </authorList>
    </citation>
    <scope>NUCLEOTIDE SEQUENCE [LARGE SCALE GENOMIC DNA]</scope>
    <source>
        <strain>RM2100 / D67 / ATCC BAA-1060</strain>
    </source>
</reference>